<organism>
    <name type="scientific">Uncinocarpus reesii (strain UAMH 1704)</name>
    <dbReference type="NCBI Taxonomy" id="336963"/>
    <lineage>
        <taxon>Eukaryota</taxon>
        <taxon>Fungi</taxon>
        <taxon>Dikarya</taxon>
        <taxon>Ascomycota</taxon>
        <taxon>Pezizomycotina</taxon>
        <taxon>Eurotiomycetes</taxon>
        <taxon>Eurotiomycetidae</taxon>
        <taxon>Onygenales</taxon>
        <taxon>Onygenaceae</taxon>
        <taxon>Uncinocarpus</taxon>
    </lineage>
</organism>
<gene>
    <name type="ORF">UREG_03761</name>
</gene>
<evidence type="ECO:0000250" key="1"/>
<evidence type="ECO:0000255" key="2"/>
<evidence type="ECO:0000255" key="3">
    <source>
        <dbReference type="PROSITE-ProRule" id="PRU10095"/>
    </source>
</evidence>
<evidence type="ECO:0000305" key="4"/>
<keyword id="KW-0165">Cleavage on pair of basic residues</keyword>
<keyword id="KW-1015">Disulfide bond</keyword>
<keyword id="KW-0378">Hydrolase</keyword>
<keyword id="KW-0479">Metal-binding</keyword>
<keyword id="KW-0482">Metalloprotease</keyword>
<keyword id="KW-0645">Protease</keyword>
<keyword id="KW-1185">Reference proteome</keyword>
<keyword id="KW-0964">Secreted</keyword>
<keyword id="KW-0732">Signal</keyword>
<keyword id="KW-0862">Zinc</keyword>
<keyword id="KW-0865">Zymogen</keyword>
<feature type="signal peptide" evidence="2">
    <location>
        <begin position="1"/>
        <end position="19"/>
    </location>
</feature>
<feature type="propeptide" id="PRO_0000407116" evidence="1">
    <location>
        <begin position="20"/>
        <end position="181"/>
    </location>
</feature>
<feature type="chain" id="PRO_0000407117" description="Neutral protease 2 homolog UREG_03761">
    <location>
        <begin position="182"/>
        <end position="356"/>
    </location>
</feature>
<feature type="active site" evidence="3">
    <location>
        <position position="309"/>
    </location>
</feature>
<feature type="binding site" evidence="3">
    <location>
        <position position="308"/>
    </location>
    <ligand>
        <name>Zn(2+)</name>
        <dbReference type="ChEBI" id="CHEBI:29105"/>
        <note>catalytic</note>
    </ligand>
</feature>
<feature type="binding site" evidence="3">
    <location>
        <position position="312"/>
    </location>
    <ligand>
        <name>Zn(2+)</name>
        <dbReference type="ChEBI" id="CHEBI:29105"/>
        <note>catalytic</note>
    </ligand>
</feature>
<feature type="binding site" evidence="3">
    <location>
        <position position="323"/>
    </location>
    <ligand>
        <name>Zn(2+)</name>
        <dbReference type="ChEBI" id="CHEBI:29105"/>
        <note>catalytic</note>
    </ligand>
</feature>
<feature type="disulfide bond" evidence="1">
    <location>
        <begin position="189"/>
        <end position="259"/>
    </location>
</feature>
<feature type="disulfide bond" evidence="1">
    <location>
        <begin position="266"/>
        <end position="284"/>
    </location>
</feature>
<protein>
    <recommendedName>
        <fullName>Neutral protease 2 homolog UREG_03761</fullName>
        <ecNumber>3.4.24.39</ecNumber>
    </recommendedName>
    <alternativeName>
        <fullName>Deuterolysin UREG_03761</fullName>
    </alternativeName>
</protein>
<reference key="1">
    <citation type="journal article" date="2009" name="Genome Res.">
        <title>Comparative genomic analyses of the human fungal pathogens Coccidioides and their relatives.</title>
        <authorList>
            <person name="Sharpton T.J."/>
            <person name="Stajich J.E."/>
            <person name="Rounsley S.D."/>
            <person name="Gardner M.J."/>
            <person name="Wortman J.R."/>
            <person name="Jordar V.S."/>
            <person name="Maiti R."/>
            <person name="Kodira C.D."/>
            <person name="Neafsey D.E."/>
            <person name="Zeng Q."/>
            <person name="Hung C.-Y."/>
            <person name="McMahan C."/>
            <person name="Muszewska A."/>
            <person name="Grynberg M."/>
            <person name="Mandel M.A."/>
            <person name="Kellner E.M."/>
            <person name="Barker B.M."/>
            <person name="Galgiani J.N."/>
            <person name="Orbach M.J."/>
            <person name="Kirkland T.N."/>
            <person name="Cole G.T."/>
            <person name="Henn M.R."/>
            <person name="Birren B.W."/>
            <person name="Taylor J.W."/>
        </authorList>
    </citation>
    <scope>NUCLEOTIDE SEQUENCE [LARGE SCALE GENOMIC DNA]</scope>
    <source>
        <strain>UAMH 1704</strain>
    </source>
</reference>
<accession>C4JLQ3</accession>
<proteinExistence type="inferred from homology"/>
<dbReference type="EC" id="3.4.24.39"/>
<dbReference type="EMBL" id="CH476616">
    <property type="protein sequence ID" value="EEP78915.1"/>
    <property type="molecule type" value="Genomic_DNA"/>
</dbReference>
<dbReference type="RefSeq" id="XP_002544244.1">
    <property type="nucleotide sequence ID" value="XM_002544198.1"/>
</dbReference>
<dbReference type="SMR" id="C4JLQ3"/>
<dbReference type="STRING" id="336963.C4JLQ3"/>
<dbReference type="GeneID" id="8444137"/>
<dbReference type="KEGG" id="ure:UREG_03761"/>
<dbReference type="VEuPathDB" id="FungiDB:UREG_03761"/>
<dbReference type="eggNOG" id="ENOG502SGF5">
    <property type="taxonomic scope" value="Eukaryota"/>
</dbReference>
<dbReference type="HOGENOM" id="CLU_039313_1_1_1"/>
<dbReference type="InParanoid" id="C4JLQ3"/>
<dbReference type="OMA" id="DGPLIAY"/>
<dbReference type="OrthoDB" id="412874at2759"/>
<dbReference type="BRENDA" id="3.4.24.39">
    <property type="organism ID" value="8258"/>
</dbReference>
<dbReference type="Proteomes" id="UP000002058">
    <property type="component" value="Unassembled WGS sequence"/>
</dbReference>
<dbReference type="GO" id="GO:0005576">
    <property type="term" value="C:extracellular region"/>
    <property type="evidence" value="ECO:0007669"/>
    <property type="project" value="UniProtKB-SubCell"/>
</dbReference>
<dbReference type="GO" id="GO:0046872">
    <property type="term" value="F:metal ion binding"/>
    <property type="evidence" value="ECO:0007669"/>
    <property type="project" value="UniProtKB-KW"/>
</dbReference>
<dbReference type="GO" id="GO:0004222">
    <property type="term" value="F:metalloendopeptidase activity"/>
    <property type="evidence" value="ECO:0007669"/>
    <property type="project" value="InterPro"/>
</dbReference>
<dbReference type="GO" id="GO:0006508">
    <property type="term" value="P:proteolysis"/>
    <property type="evidence" value="ECO:0007669"/>
    <property type="project" value="UniProtKB-KW"/>
</dbReference>
<dbReference type="CDD" id="cd11008">
    <property type="entry name" value="M35_deuterolysin_like"/>
    <property type="match status" value="1"/>
</dbReference>
<dbReference type="Gene3D" id="2.60.40.2970">
    <property type="match status" value="1"/>
</dbReference>
<dbReference type="Gene3D" id="3.40.390.10">
    <property type="entry name" value="Collagenase (Catalytic Domain)"/>
    <property type="match status" value="1"/>
</dbReference>
<dbReference type="InterPro" id="IPR050414">
    <property type="entry name" value="Fungal_M35_metalloproteases"/>
</dbReference>
<dbReference type="InterPro" id="IPR029463">
    <property type="entry name" value="Lys_MEP"/>
</dbReference>
<dbReference type="InterPro" id="IPR024079">
    <property type="entry name" value="MetalloPept_cat_dom_sf"/>
</dbReference>
<dbReference type="InterPro" id="IPR001384">
    <property type="entry name" value="Peptidase_M35"/>
</dbReference>
<dbReference type="PANTHER" id="PTHR37016">
    <property type="match status" value="1"/>
</dbReference>
<dbReference type="PANTHER" id="PTHR37016:SF3">
    <property type="entry name" value="NEUTRAL PROTEASE 2-RELATED"/>
    <property type="match status" value="1"/>
</dbReference>
<dbReference type="Pfam" id="PF02102">
    <property type="entry name" value="Peptidase_M35"/>
    <property type="match status" value="1"/>
</dbReference>
<dbReference type="PRINTS" id="PR00768">
    <property type="entry name" value="DEUTEROLYSIN"/>
</dbReference>
<dbReference type="SMART" id="SM01351">
    <property type="entry name" value="Aspzincin_M35"/>
    <property type="match status" value="1"/>
</dbReference>
<dbReference type="SUPFAM" id="SSF55486">
    <property type="entry name" value="Metalloproteases ('zincins'), catalytic domain"/>
    <property type="match status" value="1"/>
</dbReference>
<dbReference type="PROSITE" id="PS00142">
    <property type="entry name" value="ZINC_PROTEASE"/>
    <property type="match status" value="1"/>
</dbReference>
<comment type="function">
    <text evidence="1">Secreted metalloproteinase that allows assimilation of proteinaceous substrates. Shows high activities on basic nuclear substrates such as histone and protamine (By similarity).</text>
</comment>
<comment type="catalytic activity">
    <reaction>
        <text>Preferential cleavage of bonds with hydrophobic residues in P1'. Also 3-Asn-|-Gln-4 and 8-Gly-|-Ser-9 bonds in insulin B chain.</text>
        <dbReference type="EC" id="3.4.24.39"/>
    </reaction>
</comment>
<comment type="cofactor">
    <cofactor evidence="1">
        <name>Zn(2+)</name>
        <dbReference type="ChEBI" id="CHEBI:29105"/>
    </cofactor>
    <text evidence="1">Binds 1 zinc ion per subunit.</text>
</comment>
<comment type="subcellular location">
    <subcellularLocation>
        <location evidence="1">Secreted</location>
    </subcellularLocation>
</comment>
<comment type="similarity">
    <text evidence="4">Belongs to the peptidase M35 family.</text>
</comment>
<name>NPIIA_UNCRE</name>
<sequence>MRFSSSFLSVLALASQALAFPLNDLPTTDSGLEVKLTSVGNTRMKAVLTNTADHDLSFLKFNTFFDDAPTQKVRIAKDGSLVPFNGIHRYYNIDDLPQEAFIPLAPGESVEAEFDIAETSDLSAGGSYKIFASGVIPIVAGPGIKVTSAVSFSTDEMTVDVDGAEAAQVQSALPEATLDKRTRIDRNTCTGNYYNALARALQTAAGYASRAAQAAQAGNRFQEFFKTTSPQVRQNVAARFSAIAQECRSPSGGRTTYHCQDVYRACQQGIIAYTIPARSAVVNCPPYWRLPAVVNQGFAPDMGYVVVHEFAHAPSIFRPGTVDHAYGYAQCVRLNSQQALSNADNYALFAAAASRR</sequence>